<accession>Q7N0A6</accession>
<proteinExistence type="inferred from homology"/>
<feature type="chain" id="PRO_0000205258" description="Isopentenyl-diphosphate Delta-isomerase 2">
    <location>
        <begin position="1"/>
        <end position="177"/>
    </location>
</feature>
<feature type="domain" description="Nudix hydrolase">
    <location>
        <begin position="28"/>
        <end position="160"/>
    </location>
</feature>
<feature type="active site" evidence="1">
    <location>
        <position position="65"/>
    </location>
</feature>
<feature type="active site" evidence="1">
    <location>
        <position position="112"/>
    </location>
</feature>
<feature type="binding site" evidence="1">
    <location>
        <position position="24"/>
    </location>
    <ligand>
        <name>Mn(2+)</name>
        <dbReference type="ChEBI" id="CHEBI:29035"/>
    </ligand>
</feature>
<feature type="binding site" evidence="1">
    <location>
        <position position="30"/>
    </location>
    <ligand>
        <name>Mn(2+)</name>
        <dbReference type="ChEBI" id="CHEBI:29035"/>
    </ligand>
</feature>
<feature type="binding site" evidence="1">
    <location>
        <position position="65"/>
    </location>
    <ligand>
        <name>Mg(2+)</name>
        <dbReference type="ChEBI" id="CHEBI:18420"/>
    </ligand>
</feature>
<feature type="binding site" evidence="1">
    <location>
        <position position="67"/>
    </location>
    <ligand>
        <name>Mn(2+)</name>
        <dbReference type="ChEBI" id="CHEBI:29035"/>
    </ligand>
</feature>
<feature type="binding site" evidence="1">
    <location>
        <position position="85"/>
    </location>
    <ligand>
        <name>Mg(2+)</name>
        <dbReference type="ChEBI" id="CHEBI:18420"/>
    </ligand>
</feature>
<feature type="binding site" evidence="1">
    <location>
        <position position="110"/>
    </location>
    <ligand>
        <name>Mn(2+)</name>
        <dbReference type="ChEBI" id="CHEBI:29035"/>
    </ligand>
</feature>
<feature type="binding site" evidence="1">
    <location>
        <position position="112"/>
    </location>
    <ligand>
        <name>Mn(2+)</name>
        <dbReference type="ChEBI" id="CHEBI:29035"/>
    </ligand>
</feature>
<keyword id="KW-0963">Cytoplasm</keyword>
<keyword id="KW-0413">Isomerase</keyword>
<keyword id="KW-0414">Isoprene biosynthesis</keyword>
<keyword id="KW-0460">Magnesium</keyword>
<keyword id="KW-0464">Manganese</keyword>
<keyword id="KW-0479">Metal-binding</keyword>
<keyword id="KW-1185">Reference proteome</keyword>
<gene>
    <name evidence="1" type="primary">idi2</name>
    <name type="ordered locus">plu3987</name>
</gene>
<name>IDI2_PHOLL</name>
<dbReference type="EC" id="5.3.3.2" evidence="1"/>
<dbReference type="EMBL" id="BX571872">
    <property type="protein sequence ID" value="CAE16359.1"/>
    <property type="molecule type" value="Genomic_DNA"/>
</dbReference>
<dbReference type="RefSeq" id="WP_011148119.1">
    <property type="nucleotide sequence ID" value="NC_005126.1"/>
</dbReference>
<dbReference type="SMR" id="Q7N0A6"/>
<dbReference type="STRING" id="243265.plu3987"/>
<dbReference type="GeneID" id="48850212"/>
<dbReference type="KEGG" id="plu:plu3987"/>
<dbReference type="eggNOG" id="COG1443">
    <property type="taxonomic scope" value="Bacteria"/>
</dbReference>
<dbReference type="HOGENOM" id="CLU_060552_2_1_6"/>
<dbReference type="OrthoDB" id="9809458at2"/>
<dbReference type="UniPathway" id="UPA00059">
    <property type="reaction ID" value="UER00104"/>
</dbReference>
<dbReference type="Proteomes" id="UP000002514">
    <property type="component" value="Chromosome"/>
</dbReference>
<dbReference type="GO" id="GO:0005737">
    <property type="term" value="C:cytoplasm"/>
    <property type="evidence" value="ECO:0007669"/>
    <property type="project" value="UniProtKB-SubCell"/>
</dbReference>
<dbReference type="GO" id="GO:0004452">
    <property type="term" value="F:isopentenyl-diphosphate delta-isomerase activity"/>
    <property type="evidence" value="ECO:0007669"/>
    <property type="project" value="UniProtKB-UniRule"/>
</dbReference>
<dbReference type="GO" id="GO:0046872">
    <property type="term" value="F:metal ion binding"/>
    <property type="evidence" value="ECO:0007669"/>
    <property type="project" value="UniProtKB-KW"/>
</dbReference>
<dbReference type="GO" id="GO:0050992">
    <property type="term" value="P:dimethylallyl diphosphate biosynthetic process"/>
    <property type="evidence" value="ECO:0007669"/>
    <property type="project" value="UniProtKB-UniRule"/>
</dbReference>
<dbReference type="GO" id="GO:0009240">
    <property type="term" value="P:isopentenyl diphosphate biosynthetic process"/>
    <property type="evidence" value="ECO:0007669"/>
    <property type="project" value="TreeGrafter"/>
</dbReference>
<dbReference type="CDD" id="cd02885">
    <property type="entry name" value="NUDIX_IPP_Isomerase"/>
    <property type="match status" value="1"/>
</dbReference>
<dbReference type="Gene3D" id="3.90.79.10">
    <property type="entry name" value="Nucleoside Triphosphate Pyrophosphohydrolase"/>
    <property type="match status" value="1"/>
</dbReference>
<dbReference type="HAMAP" id="MF_00202">
    <property type="entry name" value="Idi"/>
    <property type="match status" value="1"/>
</dbReference>
<dbReference type="InterPro" id="IPR056375">
    <property type="entry name" value="Idi_bact"/>
</dbReference>
<dbReference type="InterPro" id="IPR011876">
    <property type="entry name" value="IsopentenylPP_isomerase_typ1"/>
</dbReference>
<dbReference type="InterPro" id="IPR015797">
    <property type="entry name" value="NUDIX_hydrolase-like_dom_sf"/>
</dbReference>
<dbReference type="InterPro" id="IPR000086">
    <property type="entry name" value="NUDIX_hydrolase_dom"/>
</dbReference>
<dbReference type="NCBIfam" id="TIGR02150">
    <property type="entry name" value="IPP_isom_1"/>
    <property type="match status" value="1"/>
</dbReference>
<dbReference type="NCBIfam" id="NF002995">
    <property type="entry name" value="PRK03759.1"/>
    <property type="match status" value="1"/>
</dbReference>
<dbReference type="PANTHER" id="PTHR10885">
    <property type="entry name" value="ISOPENTENYL-DIPHOSPHATE DELTA-ISOMERASE"/>
    <property type="match status" value="1"/>
</dbReference>
<dbReference type="PANTHER" id="PTHR10885:SF0">
    <property type="entry name" value="ISOPENTENYL-DIPHOSPHATE DELTA-ISOMERASE"/>
    <property type="match status" value="1"/>
</dbReference>
<dbReference type="Pfam" id="PF00293">
    <property type="entry name" value="NUDIX"/>
    <property type="match status" value="1"/>
</dbReference>
<dbReference type="PIRSF" id="PIRSF018427">
    <property type="entry name" value="Isopntndiph_ism"/>
    <property type="match status" value="1"/>
</dbReference>
<dbReference type="SUPFAM" id="SSF55811">
    <property type="entry name" value="Nudix"/>
    <property type="match status" value="1"/>
</dbReference>
<dbReference type="PROSITE" id="PS51462">
    <property type="entry name" value="NUDIX"/>
    <property type="match status" value="1"/>
</dbReference>
<reference key="1">
    <citation type="journal article" date="2003" name="Nat. Biotechnol.">
        <title>The genome sequence of the entomopathogenic bacterium Photorhabdus luminescens.</title>
        <authorList>
            <person name="Duchaud E."/>
            <person name="Rusniok C."/>
            <person name="Frangeul L."/>
            <person name="Buchrieser C."/>
            <person name="Givaudan A."/>
            <person name="Taourit S."/>
            <person name="Bocs S."/>
            <person name="Boursaux-Eude C."/>
            <person name="Chandler M."/>
            <person name="Charles J.-F."/>
            <person name="Dassa E."/>
            <person name="Derose R."/>
            <person name="Derzelle S."/>
            <person name="Freyssinet G."/>
            <person name="Gaudriault S."/>
            <person name="Medigue C."/>
            <person name="Lanois A."/>
            <person name="Powell K."/>
            <person name="Siguier P."/>
            <person name="Vincent R."/>
            <person name="Wingate V."/>
            <person name="Zouine M."/>
            <person name="Glaser P."/>
            <person name="Boemare N."/>
            <person name="Danchin A."/>
            <person name="Kunst F."/>
        </authorList>
    </citation>
    <scope>NUCLEOTIDE SEQUENCE [LARGE SCALE GENOMIC DNA]</scope>
    <source>
        <strain>DSM 15139 / CIP 105565 / TT01</strain>
    </source>
</reference>
<evidence type="ECO:0000255" key="1">
    <source>
        <dbReference type="HAMAP-Rule" id="MF_00202"/>
    </source>
</evidence>
<comment type="function">
    <text evidence="1">Catalyzes the 1,3-allylic rearrangement of the homoallylic substrate isopentenyl (IPP) to its highly electrophilic allylic isomer, dimethylallyl diphosphate (DMAPP).</text>
</comment>
<comment type="catalytic activity">
    <reaction evidence="1">
        <text>isopentenyl diphosphate = dimethylallyl diphosphate</text>
        <dbReference type="Rhea" id="RHEA:23284"/>
        <dbReference type="ChEBI" id="CHEBI:57623"/>
        <dbReference type="ChEBI" id="CHEBI:128769"/>
        <dbReference type="EC" id="5.3.3.2"/>
    </reaction>
</comment>
<comment type="cofactor">
    <cofactor evidence="1">
        <name>Mg(2+)</name>
        <dbReference type="ChEBI" id="CHEBI:18420"/>
    </cofactor>
    <text evidence="1">Binds 1 Mg(2+) ion per subunit. The magnesium ion binds only when substrate is bound.</text>
</comment>
<comment type="cofactor">
    <cofactor evidence="1">
        <name>Mn(2+)</name>
        <dbReference type="ChEBI" id="CHEBI:29035"/>
    </cofactor>
    <text evidence="1">Binds 1 Mn(2+) ion per subunit.</text>
</comment>
<comment type="pathway">
    <text evidence="1">Isoprenoid biosynthesis; dimethylallyl diphosphate biosynthesis; dimethylallyl diphosphate from isopentenyl diphosphate: step 1/1.</text>
</comment>
<comment type="subunit">
    <text evidence="1">Homodimer.</text>
</comment>
<comment type="subcellular location">
    <subcellularLocation>
        <location evidence="1">Cytoplasm</location>
    </subcellularLocation>
</comment>
<comment type="similarity">
    <text evidence="1">Belongs to the IPP isomerase type 1 family.</text>
</comment>
<sequence length="177" mass="20340">MDEILVLVDKHDNPIGSAGKADIHQKGMLHRAFSIFVFDNKGNLLLQKRAATKYHSAGLWTNSCCGHPRVGEALEAAAHRRLGEEMGFDCPLKKVSSFIYHAILPNNLIEYEYDHVFIGRFDKEPIINLDEVSDYKWVNLLKLRALINNAPDVYTVWFKKIINGLSYQDIEEWQRLI</sequence>
<protein>
    <recommendedName>
        <fullName evidence="1">Isopentenyl-diphosphate Delta-isomerase 2</fullName>
        <shortName evidence="1">IPP isomerase 2</shortName>
        <ecNumber evidence="1">5.3.3.2</ecNumber>
    </recommendedName>
    <alternativeName>
        <fullName evidence="1">IPP:DMAPP isomerase 2</fullName>
    </alternativeName>
    <alternativeName>
        <fullName evidence="1">Isopentenyl pyrophosphate isomerase 2</fullName>
    </alternativeName>
</protein>
<organism>
    <name type="scientific">Photorhabdus laumondii subsp. laumondii (strain DSM 15139 / CIP 105565 / TT01)</name>
    <name type="common">Photorhabdus luminescens subsp. laumondii</name>
    <dbReference type="NCBI Taxonomy" id="243265"/>
    <lineage>
        <taxon>Bacteria</taxon>
        <taxon>Pseudomonadati</taxon>
        <taxon>Pseudomonadota</taxon>
        <taxon>Gammaproteobacteria</taxon>
        <taxon>Enterobacterales</taxon>
        <taxon>Morganellaceae</taxon>
        <taxon>Photorhabdus</taxon>
    </lineage>
</organism>